<proteinExistence type="evidence at protein level"/>
<sequence length="1450" mass="162541">MSRGAPFPVPCPVLLGTFTDDSLEAQLHEYAKQGNCVKLKKILKKGVCVDAVNTQGQSALFVAALLGHVKLVDVLVDYGSDPNHRCFDGSTPVHAAAFSGNQWILSKLLTAGGDLRLHDEKGRNPQAWALTAGKDRSTQMVEFMQRCTSHMKAIIQGFSYDLLKKIDSPQRLIGSPPWFGSLIQGSPNSSPNRQLKPGIISAQNIYSFGFGKFYLTSGMQLTYPGSLPVIGEKEVVQADDEPTFSFFSGPYMVMTNLVWNRSRVTVKELNLPTRPHCSRLRLADLLIAEQEHSSNLRHPNLLQLMAVCLSRDLEKIRLVYERITVGTLFSVLHERRSQFPVLHMEVIVHLLLQVADALIYLHSRGFIHRSLSSYAVHIVSAGEARLTNLEYLTESQDSGAHRNVTRMPLPTQLYNWAAPEVVLQKAATVKSDIYSFSVIIQEILTDSIPWNGLDGSLVKETIALGNYLEADVRLPEPYYDIVKSGIHAKQKNRTMNLQDIRYILKNDLKEFIGAQKTQPTESPRGQSYEPHPDVNICLGLTSEYQKDPPDLDIKELKEMGSQPHSPTDHSFLTVKPTLAPQTLDSSLSAQKPDNANVPSPPAACLAEEVRSPTASQDSLCSFEINEIYSGCLTLGTDKEEECLGTAASPEGDRPNQGDELPSLEEELDKMERELHCFCEEDKSISEVDTDLLFEDDDWQSDSLGSLNLPEPTREAKGKTSSWSKTDEYVSKCVLNLKISQVMMQQSAEWLRKLEQEVEELEWAQKELDSQCSSLRDASLKFANAKFQPAVGPPSLAYLPPVMQLPGLKQPENGGTWLTLARSPGNEREFQEGHFSKKPEKLSACGWKPFTQVSEESRGDCSELNNQLPTLRGPGKQSTGEQLPSTQEARESLEKNTNQNSRSMASVSSEIYATKSRNNEDNGEAHLKWRLAVKEMAEKAVSGQLLLPPWNPQSSAPFESKVENESTPLPRPPIRGPESTEWQHILEYQRENDEPKGNTKFGKMDNSDCDKNKHSRWTGLQRFTGIRYPFFRNHEQPEQNEASQASCDTSVGTEKFYSTSSPIGDDFERFQDSFAQRQGYVEENFQIREIFEKNAEILTKPQFQAIQCAEDKQDETLGETPKELKEKNTSLTDIQDLSSITYDQDGYFKETSYKTPKLKHAPTSASTPLSPESISSAASHYEDCLENTTFHVKRGSTFCWNGQEAMRTLSAKFTTVRERAKSLESLLASSKSLPAKLTDSKRLCMLSETGSSNVSAAFVTSTHATKRKSLPRELAEATSQQHLDELPPPAQELLDEIEQLKQQQVSSLASHENTARDLSVTNKDKKHLEEQETNSSKDSSFLSSREIQDLEDTERAHSSLDEDLERFLQSPEENTALLDPTKGSTREKKNKDQDVVEQKRKKKESIKPERRESDSSLGTLEEDELKPCFWKRLGWSEPSRIIVLDQSDLSD</sequence>
<dbReference type="EMBL" id="AF285584">
    <property type="protein sequence ID" value="AAK31963.1"/>
    <property type="molecule type" value="mRNA"/>
</dbReference>
<dbReference type="EMBL" id="AL596086">
    <property type="protein sequence ID" value="CAI35127.1"/>
    <property type="molecule type" value="Genomic_DNA"/>
</dbReference>
<dbReference type="EMBL" id="AL669902">
    <property type="protein sequence ID" value="CAI35127.1"/>
    <property type="status" value="JOINED"/>
    <property type="molecule type" value="Genomic_DNA"/>
</dbReference>
<dbReference type="EMBL" id="AL669902">
    <property type="protein sequence ID" value="CAI35965.1"/>
    <property type="status" value="ALT_INIT"/>
    <property type="molecule type" value="Genomic_DNA"/>
</dbReference>
<dbReference type="EMBL" id="AL669902">
    <property type="protein sequence ID" value="CAI35966.1"/>
    <property type="molecule type" value="Genomic_DNA"/>
</dbReference>
<dbReference type="EMBL" id="AL596086">
    <property type="protein sequence ID" value="CAI35966.1"/>
    <property type="status" value="JOINED"/>
    <property type="molecule type" value="Genomic_DNA"/>
</dbReference>
<dbReference type="EMBL" id="CU406969">
    <property type="protein sequence ID" value="CAQ52018.1"/>
    <property type="molecule type" value="Genomic_DNA"/>
</dbReference>
<dbReference type="EMBL" id="CU406988">
    <property type="protein sequence ID" value="CAQ52018.1"/>
    <property type="status" value="JOINED"/>
    <property type="molecule type" value="Genomic_DNA"/>
</dbReference>
<dbReference type="EMBL" id="CU406988">
    <property type="protein sequence ID" value="CAQ52278.1"/>
    <property type="molecule type" value="Genomic_DNA"/>
</dbReference>
<dbReference type="EMBL" id="CU406969">
    <property type="protein sequence ID" value="CAQ52278.1"/>
    <property type="status" value="JOINED"/>
    <property type="molecule type" value="Genomic_DNA"/>
</dbReference>
<dbReference type="EMBL" id="AY193717">
    <property type="protein sequence ID" value="AAN86761.1"/>
    <property type="molecule type" value="mRNA"/>
</dbReference>
<dbReference type="EMBL" id="AY193718">
    <property type="protein sequence ID" value="AAN86762.1"/>
    <property type="molecule type" value="mRNA"/>
</dbReference>
<dbReference type="EMBL" id="BK000966">
    <property type="protein sequence ID" value="DAA01357.1"/>
    <property type="molecule type" value="mRNA"/>
</dbReference>
<dbReference type="EMBL" id="BK000967">
    <property type="protein sequence ID" value="DAA01358.1"/>
    <property type="molecule type" value="mRNA"/>
</dbReference>
<dbReference type="EMBL" id="AK139808">
    <property type="protein sequence ID" value="BAE24144.1"/>
    <property type="molecule type" value="mRNA"/>
</dbReference>
<dbReference type="CCDS" id="CCDS48877.1">
    <molecule id="Q7M6U3-1"/>
</dbReference>
<dbReference type="RefSeq" id="NP_001186222.1">
    <property type="nucleotide sequence ID" value="NM_001199293.1"/>
</dbReference>
<dbReference type="RefSeq" id="NP_113563.2">
    <molecule id="Q7M6U3-1"/>
    <property type="nucleotide sequence ID" value="NM_031386.2"/>
</dbReference>
<dbReference type="SMR" id="Q7M6U3"/>
<dbReference type="BioGRID" id="219946">
    <property type="interactions" value="7"/>
</dbReference>
<dbReference type="ELM" id="Q7M6U3"/>
<dbReference type="FunCoup" id="Q7M6U3">
    <property type="interactions" value="20"/>
</dbReference>
<dbReference type="IntAct" id="Q7M6U3">
    <property type="interactions" value="2"/>
</dbReference>
<dbReference type="STRING" id="10090.ENSMUSP00000054444"/>
<dbReference type="iPTMnet" id="Q7M6U3"/>
<dbReference type="PhosphoSitePlus" id="Q7M6U3"/>
<dbReference type="SwissPalm" id="Q7M6U3"/>
<dbReference type="PaxDb" id="10090-ENSMUSP00000054444"/>
<dbReference type="PeptideAtlas" id="Q7M6U3"/>
<dbReference type="ProteomicsDB" id="259004">
    <molecule id="Q7M6U3-1"/>
</dbReference>
<dbReference type="ProteomicsDB" id="259005">
    <molecule id="Q7M6U3-2"/>
</dbReference>
<dbReference type="Antibodypedia" id="31015">
    <property type="antibodies" value="88 antibodies from 24 providers"/>
</dbReference>
<dbReference type="DNASU" id="83560"/>
<dbReference type="Ensembl" id="ENSMUST00000060835.12">
    <molecule id="Q7M6U3-1"/>
    <property type="protein sequence ID" value="ENSMUSP00000054444.6"/>
    <property type="gene ID" value="ENSMUSG00000010342.17"/>
</dbReference>
<dbReference type="GeneID" id="83560"/>
<dbReference type="KEGG" id="mmu:83560"/>
<dbReference type="UCSC" id="uc007ktr.2">
    <molecule id="Q7M6U3-1"/>
    <property type="organism name" value="mouse"/>
</dbReference>
<dbReference type="AGR" id="MGI:1933227"/>
<dbReference type="CTD" id="56155"/>
<dbReference type="MGI" id="MGI:1933227">
    <property type="gene designation" value="Tex14"/>
</dbReference>
<dbReference type="VEuPathDB" id="HostDB:ENSMUSG00000010342"/>
<dbReference type="eggNOG" id="ENOG502QSZN">
    <property type="taxonomic scope" value="Eukaryota"/>
</dbReference>
<dbReference type="GeneTree" id="ENSGT00390000015123"/>
<dbReference type="HOGENOM" id="CLU_004733_0_0_1"/>
<dbReference type="InParanoid" id="Q7M6U3"/>
<dbReference type="OMA" id="FGKAMPW"/>
<dbReference type="OrthoDB" id="5962695at2759"/>
<dbReference type="PhylomeDB" id="Q7M6U3"/>
<dbReference type="TreeFam" id="TF328704"/>
<dbReference type="BioGRID-ORCS" id="83560">
    <property type="hits" value="1 hit in 80 CRISPR screens"/>
</dbReference>
<dbReference type="ChiTaRS" id="Tex14">
    <property type="organism name" value="mouse"/>
</dbReference>
<dbReference type="PRO" id="PR:Q7M6U3"/>
<dbReference type="Proteomes" id="UP000000589">
    <property type="component" value="Chromosome 11"/>
</dbReference>
<dbReference type="RNAct" id="Q7M6U3">
    <property type="molecule type" value="protein"/>
</dbReference>
<dbReference type="Bgee" id="ENSMUSG00000010342">
    <property type="expression patterns" value="Expressed in spermatocyte and 63 other cell types or tissues"/>
</dbReference>
<dbReference type="ExpressionAtlas" id="Q7M6U3">
    <property type="expression patterns" value="baseline and differential"/>
</dbReference>
<dbReference type="GO" id="GO:0005737">
    <property type="term" value="C:cytoplasm"/>
    <property type="evidence" value="ECO:0007669"/>
    <property type="project" value="UniProtKB-SubCell"/>
</dbReference>
<dbReference type="GO" id="GO:0045171">
    <property type="term" value="C:intercellular bridge"/>
    <property type="evidence" value="ECO:0000314"/>
    <property type="project" value="UniProtKB"/>
</dbReference>
<dbReference type="GO" id="GO:0000776">
    <property type="term" value="C:kinetochore"/>
    <property type="evidence" value="ECO:0000314"/>
    <property type="project" value="UniProtKB"/>
</dbReference>
<dbReference type="GO" id="GO:0030496">
    <property type="term" value="C:midbody"/>
    <property type="evidence" value="ECO:0000314"/>
    <property type="project" value="UniProtKB"/>
</dbReference>
<dbReference type="GO" id="GO:0005524">
    <property type="term" value="F:ATP binding"/>
    <property type="evidence" value="ECO:0007669"/>
    <property type="project" value="UniProtKB-KW"/>
</dbReference>
<dbReference type="GO" id="GO:0004672">
    <property type="term" value="F:protein kinase activity"/>
    <property type="evidence" value="ECO:0007669"/>
    <property type="project" value="InterPro"/>
</dbReference>
<dbReference type="GO" id="GO:0019901">
    <property type="term" value="F:protein kinase binding"/>
    <property type="evidence" value="ECO:0007669"/>
    <property type="project" value="Ensembl"/>
</dbReference>
<dbReference type="GO" id="GO:0008608">
    <property type="term" value="P:attachment of spindle microtubules to kinetochore"/>
    <property type="evidence" value="ECO:0000315"/>
    <property type="project" value="UniProtKB"/>
</dbReference>
<dbReference type="GO" id="GO:0051301">
    <property type="term" value="P:cell division"/>
    <property type="evidence" value="ECO:0007669"/>
    <property type="project" value="UniProtKB-KW"/>
</dbReference>
<dbReference type="GO" id="GO:1990830">
    <property type="term" value="P:cellular response to leukemia inhibitory factor"/>
    <property type="evidence" value="ECO:0000270"/>
    <property type="project" value="MGI"/>
</dbReference>
<dbReference type="GO" id="GO:0043063">
    <property type="term" value="P:intercellular bridge organization"/>
    <property type="evidence" value="ECO:0000314"/>
    <property type="project" value="UniProtKB"/>
</dbReference>
<dbReference type="GO" id="GO:0007140">
    <property type="term" value="P:male meiotic nuclear division"/>
    <property type="evidence" value="ECO:0000315"/>
    <property type="project" value="UniProtKB"/>
</dbReference>
<dbReference type="GO" id="GO:0051306">
    <property type="term" value="P:mitotic sister chromatid separation"/>
    <property type="evidence" value="ECO:0000315"/>
    <property type="project" value="UniProtKB"/>
</dbReference>
<dbReference type="GO" id="GO:0007094">
    <property type="term" value="P:mitotic spindle assembly checkpoint signaling"/>
    <property type="evidence" value="ECO:0000315"/>
    <property type="project" value="UniProtKB"/>
</dbReference>
<dbReference type="GO" id="GO:0032466">
    <property type="term" value="P:negative regulation of cytokinesis"/>
    <property type="evidence" value="ECO:0000314"/>
    <property type="project" value="MGI"/>
</dbReference>
<dbReference type="FunFam" id="1.10.510.10:FF:000428">
    <property type="entry name" value="inactive serine/threonine-protein kinase TEX14 isoform X1"/>
    <property type="match status" value="1"/>
</dbReference>
<dbReference type="FunFam" id="1.25.40.20:FF:000153">
    <property type="entry name" value="inactive serine/threonine-protein kinase TEX14 isoform X3"/>
    <property type="match status" value="1"/>
</dbReference>
<dbReference type="Gene3D" id="1.25.40.20">
    <property type="entry name" value="Ankyrin repeat-containing domain"/>
    <property type="match status" value="1"/>
</dbReference>
<dbReference type="Gene3D" id="1.10.510.10">
    <property type="entry name" value="Transferase(Phosphotransferase) domain 1"/>
    <property type="match status" value="1"/>
</dbReference>
<dbReference type="InterPro" id="IPR002110">
    <property type="entry name" value="Ankyrin_rpt"/>
</dbReference>
<dbReference type="InterPro" id="IPR036770">
    <property type="entry name" value="Ankyrin_rpt-contain_sf"/>
</dbReference>
<dbReference type="InterPro" id="IPR011009">
    <property type="entry name" value="Kinase-like_dom_sf"/>
</dbReference>
<dbReference type="InterPro" id="IPR000719">
    <property type="entry name" value="Prot_kinase_dom"/>
</dbReference>
<dbReference type="InterPro" id="IPR001245">
    <property type="entry name" value="Ser-Thr/Tyr_kinase_cat_dom"/>
</dbReference>
<dbReference type="InterPro" id="IPR039339">
    <property type="entry name" value="Tex14"/>
</dbReference>
<dbReference type="PANTHER" id="PTHR23060:SF1">
    <property type="entry name" value="INACTIVE SERINE_THREONINE-PROTEIN KINASE TEX14"/>
    <property type="match status" value="1"/>
</dbReference>
<dbReference type="PANTHER" id="PTHR23060">
    <property type="entry name" value="TESTIS EXPRESSED GENE 14"/>
    <property type="match status" value="1"/>
</dbReference>
<dbReference type="Pfam" id="PF12796">
    <property type="entry name" value="Ank_2"/>
    <property type="match status" value="1"/>
</dbReference>
<dbReference type="Pfam" id="PF07714">
    <property type="entry name" value="PK_Tyr_Ser-Thr"/>
    <property type="match status" value="1"/>
</dbReference>
<dbReference type="SMART" id="SM00248">
    <property type="entry name" value="ANK"/>
    <property type="match status" value="3"/>
</dbReference>
<dbReference type="SUPFAM" id="SSF48403">
    <property type="entry name" value="Ankyrin repeat"/>
    <property type="match status" value="1"/>
</dbReference>
<dbReference type="SUPFAM" id="SSF56112">
    <property type="entry name" value="Protein kinase-like (PK-like)"/>
    <property type="match status" value="1"/>
</dbReference>
<dbReference type="PROSITE" id="PS50297">
    <property type="entry name" value="ANK_REP_REGION"/>
    <property type="match status" value="1"/>
</dbReference>
<dbReference type="PROSITE" id="PS50088">
    <property type="entry name" value="ANK_REPEAT"/>
    <property type="match status" value="2"/>
</dbReference>
<dbReference type="PROSITE" id="PS50011">
    <property type="entry name" value="PROTEIN_KINASE_DOM"/>
    <property type="match status" value="1"/>
</dbReference>
<organism>
    <name type="scientific">Mus musculus</name>
    <name type="common">Mouse</name>
    <dbReference type="NCBI Taxonomy" id="10090"/>
    <lineage>
        <taxon>Eukaryota</taxon>
        <taxon>Metazoa</taxon>
        <taxon>Chordata</taxon>
        <taxon>Craniata</taxon>
        <taxon>Vertebrata</taxon>
        <taxon>Euteleostomi</taxon>
        <taxon>Mammalia</taxon>
        <taxon>Eutheria</taxon>
        <taxon>Euarchontoglires</taxon>
        <taxon>Glires</taxon>
        <taxon>Rodentia</taxon>
        <taxon>Myomorpha</taxon>
        <taxon>Muroidea</taxon>
        <taxon>Muridae</taxon>
        <taxon>Murinae</taxon>
        <taxon>Mus</taxon>
        <taxon>Mus</taxon>
    </lineage>
</organism>
<feature type="chain" id="PRO_0000246996" description="Inactive serine/threonine-protein kinase TEX14">
    <location>
        <begin position="1"/>
        <end position="1450"/>
    </location>
</feature>
<feature type="repeat" description="ANK 1">
    <location>
        <begin position="27"/>
        <end position="54"/>
    </location>
</feature>
<feature type="repeat" description="ANK 2">
    <location>
        <begin position="55"/>
        <end position="84"/>
    </location>
</feature>
<feature type="repeat" description="ANK 3">
    <location>
        <begin position="88"/>
        <end position="117"/>
    </location>
</feature>
<feature type="domain" description="Protein kinase" evidence="2">
    <location>
        <begin position="199"/>
        <end position="512"/>
    </location>
</feature>
<feature type="region of interest" description="Disordered" evidence="3">
    <location>
        <begin position="700"/>
        <end position="720"/>
    </location>
</feature>
<feature type="region of interest" description="Disordered" evidence="3">
    <location>
        <begin position="852"/>
        <end position="906"/>
    </location>
</feature>
<feature type="region of interest" description="Disordered" evidence="3">
    <location>
        <begin position="947"/>
        <end position="977"/>
    </location>
</feature>
<feature type="region of interest" description="Disordered" evidence="3">
    <location>
        <begin position="992"/>
        <end position="1012"/>
    </location>
</feature>
<feature type="region of interest" description="Disordered" evidence="3">
    <location>
        <begin position="1035"/>
        <end position="1062"/>
    </location>
</feature>
<feature type="region of interest" description="Disordered" evidence="3">
    <location>
        <begin position="1261"/>
        <end position="1282"/>
    </location>
</feature>
<feature type="region of interest" description="Disordered" evidence="3">
    <location>
        <begin position="1300"/>
        <end position="1418"/>
    </location>
</feature>
<feature type="short sequence motif" description="GPPX3Y">
    <location>
        <begin position="791"/>
        <end position="797"/>
    </location>
</feature>
<feature type="short sequence motif" description="D-box">
    <location>
        <begin position="889"/>
        <end position="897"/>
    </location>
</feature>
<feature type="compositionally biased region" description="Polar residues" evidence="3">
    <location>
        <begin position="875"/>
        <end position="886"/>
    </location>
</feature>
<feature type="compositionally biased region" description="Polar residues" evidence="3">
    <location>
        <begin position="894"/>
        <end position="906"/>
    </location>
</feature>
<feature type="compositionally biased region" description="Basic and acidic residues" evidence="3">
    <location>
        <begin position="992"/>
        <end position="1011"/>
    </location>
</feature>
<feature type="compositionally biased region" description="Polar residues" evidence="3">
    <location>
        <begin position="1038"/>
        <end position="1061"/>
    </location>
</feature>
<feature type="compositionally biased region" description="Polar residues" evidence="3">
    <location>
        <begin position="1300"/>
        <end position="1311"/>
    </location>
</feature>
<feature type="compositionally biased region" description="Polar residues" evidence="3">
    <location>
        <begin position="1332"/>
        <end position="1344"/>
    </location>
</feature>
<feature type="compositionally biased region" description="Basic and acidic residues" evidence="3">
    <location>
        <begin position="1383"/>
        <end position="1397"/>
    </location>
</feature>
<feature type="compositionally biased region" description="Basic and acidic residues" evidence="3">
    <location>
        <begin position="1404"/>
        <end position="1413"/>
    </location>
</feature>
<feature type="binding site" evidence="2">
    <location>
        <begin position="205"/>
        <end position="213"/>
    </location>
    <ligand>
        <name>ATP</name>
        <dbReference type="ChEBI" id="CHEBI:30616"/>
    </ligand>
</feature>
<feature type="binding site" evidence="2">
    <location>
        <position position="267"/>
    </location>
    <ligand>
        <name>ATP</name>
        <dbReference type="ChEBI" id="CHEBI:30616"/>
    </ligand>
</feature>
<feature type="modified residue" description="Phosphoserine" evidence="1">
    <location>
        <position position="175"/>
    </location>
</feature>
<feature type="modified residue" description="Phosphoserine" evidence="15">
    <location>
        <position position="186"/>
    </location>
</feature>
<feature type="modified residue" description="Phosphoserine; by PLK1" evidence="11">
    <location>
        <position position="431"/>
    </location>
</feature>
<feature type="modified residue" description="Phosphoserine" evidence="1">
    <location>
        <position position="561"/>
    </location>
</feature>
<feature type="modified residue" description="Phosphoserine" evidence="1">
    <location>
        <position position="662"/>
    </location>
</feature>
<feature type="modified residue" description="Phosphoserine" evidence="15">
    <location>
        <position position="1060"/>
    </location>
</feature>
<feature type="modified residue" description="Phosphoserine" evidence="15">
    <location>
        <position position="1221"/>
    </location>
</feature>
<feature type="modified residue" description="Phosphoserine" evidence="15">
    <location>
        <position position="1357"/>
    </location>
</feature>
<feature type="modified residue" description="Phosphoserine" evidence="15">
    <location>
        <position position="1358"/>
    </location>
</feature>
<feature type="modified residue" description="Phosphoserine" evidence="15">
    <location>
        <position position="1412"/>
    </location>
</feature>
<feature type="modified residue" description="Phosphoserine" evidence="15">
    <location>
        <position position="1449"/>
    </location>
</feature>
<feature type="splice variant" id="VSP_019870" description="In isoform 2." evidence="12">
    <location>
        <begin position="1"/>
        <end position="218"/>
    </location>
</feature>
<feature type="mutagenesis site" description="Reduced phosphorylation by PLK1 and abolishes depletion from kinetochores and subsequent degradation by the APC/C complex." evidence="11">
    <original>S</original>
    <variation>A</variation>
    <location>
        <position position="431"/>
    </location>
</feature>
<feature type="mutagenesis site" description="Mimicks phosphorylation state; inducing early depletion from kinetochores and subsequent degradation by the APC/C complex." evidence="11">
    <original>S</original>
    <variation>D</variation>
    <variation>E</variation>
    <location>
        <position position="431"/>
    </location>
</feature>
<feature type="mutagenesis site" description="Does not affect interaction with CEP55." evidence="9">
    <original>G</original>
    <variation>A</variation>
    <location>
        <position position="791"/>
    </location>
</feature>
<feature type="mutagenesis site" description="Abolishes interaction with CEP55." evidence="9">
    <original>P</original>
    <variation>A</variation>
    <location>
        <position position="792"/>
    </location>
</feature>
<feature type="mutagenesis site" description="Abolishes interaction with CEP55." evidence="9">
    <original>Y</original>
    <variation>A</variation>
    <location>
        <position position="797"/>
    </location>
</feature>
<feature type="mutagenesis site" description="Prevents degradation during metaphase." evidence="11">
    <location>
        <begin position="889"/>
        <end position="897"/>
    </location>
</feature>
<feature type="sequence conflict" description="In Ref. 1; AAK31963." evidence="13" ref="1">
    <original>T</original>
    <variation>A</variation>
    <location>
        <position position="324"/>
    </location>
</feature>
<comment type="function">
    <text evidence="6 8 9 11">Required both for the formation of intercellular bridges during meiosis and for kinetochore-microtubule attachment during mitosis. Intercellular bridges are evolutionarily conserved structures that connect differentiating germ cells and are required for spermatogenesis and male fertility. Acts by promoting the conversion of midbodies into intercellular bridges via its interaction with CEP55: interaction with CEP55 inhibits the interaction between CEP55 and PDCD6IP/ALIX and TSG101, blocking cell abscission and leading to transform midbodies into intercellular bridges. Also plays a role during mitosis: recruited to kinetochores by PLK1 during early mitosis and regulates the maturation of the outer kinetochores and microtubule attachment. Has no protein kinase activity in vitro.</text>
</comment>
<comment type="subunit">
    <text evidence="7 9 10">Interacts with KIF23 and RBM44. Interacts with CEP55; inhibiting interaction between CEP55 and PDCD6IP/ALIX and TSG101.</text>
</comment>
<comment type="interaction">
    <interactant intactId="EBI-6674575">
        <id>Q7M6U3</id>
    </interactant>
    <interactant intactId="EBI-2552328">
        <id>Q8BT07</id>
        <label>Cep55</label>
    </interactant>
    <organismsDiffer>false</organismsDiffer>
    <experiments>11</experiments>
</comment>
<comment type="subcellular location">
    <subcellularLocation>
        <location>Cytoplasm</location>
    </subcellularLocation>
    <subcellularLocation>
        <location>Midbody</location>
    </subcellularLocation>
    <subcellularLocation>
        <location>Chromosome</location>
        <location>Centromere</location>
        <location>Kinetochore</location>
    </subcellularLocation>
    <text>Detected in the intercellular bridges that connect male germ cell daughter cells after cell division.</text>
</comment>
<comment type="alternative products">
    <event type="alternative splicing"/>
    <isoform>
        <id>Q7M6U3-1</id>
        <name>1</name>
        <sequence type="displayed"/>
    </isoform>
    <isoform>
        <id>Q7M6U3-2</id>
        <name>2</name>
        <sequence type="described" ref="VSP_019870"/>
    </isoform>
</comment>
<comment type="tissue specificity">
    <text evidence="4 5 6">Detected in testis and spermatogonia. Not detectable in the other tissues tested.</text>
</comment>
<comment type="developmental stage">
    <text evidence="5">Detected at low levels in developing testis at 5 and 10 days after birth. Highly expressed in testis 15 and 20 days after birth. Highly expressed in pachytene, diplotene and meiotically dividing spermatocytes and in early round spermatids.</text>
</comment>
<comment type="domain">
    <text>The protein kinase domain is predicted to be catalytically inactive.</text>
</comment>
<comment type="domain">
    <text evidence="9">The GPPX3Y motif mediates interaction with CEP55.</text>
</comment>
<comment type="PTM">
    <text evidence="11">Phosphorylated on Thr residues by CDK1 during early phases of mitosis, promoting the interaction with PLK1 and recruitment to kinetochores. Phosphorylated on Ser-431 by PLK1 during late prometaphase promotes the rapid depletion from kinetochores and its subsequent degradation by the APC/C complex.</text>
</comment>
<comment type="disruption phenotype">
    <text evidence="6 8">Male mice are sterile, due to the absence of intercellular bridges. Intercellular bridges do not form during spermatogenesis, and male mice are sterile. In females, embryonic intercellular bridges are also absent, mice have fewer oocytes, but they are fertile.</text>
</comment>
<comment type="miscellaneous">
    <text evidence="14">Used as a marker for intercellular bridges.</text>
</comment>
<comment type="similarity">
    <text evidence="13">Belongs to the protein kinase superfamily.</text>
</comment>
<comment type="caution">
    <text evidence="13">Ser-370 is present instead of the conserved Asp which is expected to be an active site residue.</text>
</comment>
<comment type="sequence caution" evidence="13">
    <conflict type="erroneous initiation">
        <sequence resource="EMBL-CDS" id="CAI35965"/>
    </conflict>
    <text>Extended N-terminus.</text>
</comment>
<keyword id="KW-0025">Alternative splicing</keyword>
<keyword id="KW-0040">ANK repeat</keyword>
<keyword id="KW-0067">ATP-binding</keyword>
<keyword id="KW-0131">Cell cycle</keyword>
<keyword id="KW-0132">Cell division</keyword>
<keyword id="KW-0137">Centromere</keyword>
<keyword id="KW-0158">Chromosome</keyword>
<keyword id="KW-0963">Cytoplasm</keyword>
<keyword id="KW-0995">Kinetochore</keyword>
<keyword id="KW-0498">Mitosis</keyword>
<keyword id="KW-0547">Nucleotide-binding</keyword>
<keyword id="KW-0597">Phosphoprotein</keyword>
<keyword id="KW-1185">Reference proteome</keyword>
<keyword id="KW-0677">Repeat</keyword>
<gene>
    <name type="primary">Tex14</name>
</gene>
<protein>
    <recommendedName>
        <fullName>Inactive serine/threonine-protein kinase TEX14</fullName>
    </recommendedName>
    <alternativeName>
        <fullName>Testis-expressed sequence 14</fullName>
    </alternativeName>
    <alternativeName>
        <fullName>Testis-expressed sequence 14 protein</fullName>
    </alternativeName>
</protein>
<name>TEX14_MOUSE</name>
<accession>Q7M6U3</accession>
<accession>B2KGL0</accession>
<accession>Q3UT36</accession>
<accession>Q5NC10</accession>
<accession>Q5NC11</accession>
<accession>Q8CGK1</accession>
<accession>Q8CGK2</accession>
<accession>Q99MV8</accession>
<reference key="1">
    <citation type="journal article" date="2001" name="Nat. Genet.">
        <title>An abundance of X-linked genes expressed in spermatogonia.</title>
        <authorList>
            <person name="Wang P.J."/>
            <person name="McCarrey J.R."/>
            <person name="Yang F."/>
            <person name="Page D.C."/>
        </authorList>
    </citation>
    <scope>NUCLEOTIDE SEQUENCE [MRNA] (ISOFORM 2)</scope>
    <scope>TISSUE SPECIFICITY</scope>
    <source>
        <tissue>Testis</tissue>
    </source>
</reference>
<reference key="2">
    <citation type="journal article" date="2009" name="PLoS Biol.">
        <title>Lineage-specific biology revealed by a finished genome assembly of the mouse.</title>
        <authorList>
            <person name="Church D.M."/>
            <person name="Goodstadt L."/>
            <person name="Hillier L.W."/>
            <person name="Zody M.C."/>
            <person name="Goldstein S."/>
            <person name="She X."/>
            <person name="Bult C.J."/>
            <person name="Agarwala R."/>
            <person name="Cherry J.L."/>
            <person name="DiCuccio M."/>
            <person name="Hlavina W."/>
            <person name="Kapustin Y."/>
            <person name="Meric P."/>
            <person name="Maglott D."/>
            <person name="Birtle Z."/>
            <person name="Marques A.C."/>
            <person name="Graves T."/>
            <person name="Zhou S."/>
            <person name="Teague B."/>
            <person name="Potamousis K."/>
            <person name="Churas C."/>
            <person name="Place M."/>
            <person name="Herschleb J."/>
            <person name="Runnheim R."/>
            <person name="Forrest D."/>
            <person name="Amos-Landgraf J."/>
            <person name="Schwartz D.C."/>
            <person name="Cheng Z."/>
            <person name="Lindblad-Toh K."/>
            <person name="Eichler E.E."/>
            <person name="Ponting C.P."/>
        </authorList>
    </citation>
    <scope>NUCLEOTIDE SEQUENCE [LARGE SCALE GENOMIC DNA]</scope>
    <source>
        <strain>C57BL/6J</strain>
    </source>
</reference>
<reference key="3">
    <citation type="journal article" date="2003" name="Gene Expr. Patterns">
        <title>Sequence and expression of testis-expressed gene 14 (Tex14): a gene encoding a protein kinase preferentially expressed during spermatogenesis.</title>
        <authorList>
            <person name="Wu M.-H."/>
            <person name="Rajkovic A."/>
            <person name="Burns K.H."/>
            <person name="Yan W."/>
            <person name="Lin Y.-N."/>
            <person name="Matzuk M.M."/>
        </authorList>
    </citation>
    <scope>NUCLEOTIDE SEQUENCE [MRNA] OF 1-227 (ISOFORM 1)</scope>
    <scope>IDENTIFICATION</scope>
    <scope>DEVELOPMENTAL STAGE</scope>
    <scope>TISSUE SPECIFICITY</scope>
</reference>
<reference key="4">
    <citation type="journal article" date="2005" name="Science">
        <title>The transcriptional landscape of the mammalian genome.</title>
        <authorList>
            <person name="Carninci P."/>
            <person name="Kasukawa T."/>
            <person name="Katayama S."/>
            <person name="Gough J."/>
            <person name="Frith M.C."/>
            <person name="Maeda N."/>
            <person name="Oyama R."/>
            <person name="Ravasi T."/>
            <person name="Lenhard B."/>
            <person name="Wells C."/>
            <person name="Kodzius R."/>
            <person name="Shimokawa K."/>
            <person name="Bajic V.B."/>
            <person name="Brenner S.E."/>
            <person name="Batalov S."/>
            <person name="Forrest A.R."/>
            <person name="Zavolan M."/>
            <person name="Davis M.J."/>
            <person name="Wilming L.G."/>
            <person name="Aidinis V."/>
            <person name="Allen J.E."/>
            <person name="Ambesi-Impiombato A."/>
            <person name="Apweiler R."/>
            <person name="Aturaliya R.N."/>
            <person name="Bailey T.L."/>
            <person name="Bansal M."/>
            <person name="Baxter L."/>
            <person name="Beisel K.W."/>
            <person name="Bersano T."/>
            <person name="Bono H."/>
            <person name="Chalk A.M."/>
            <person name="Chiu K.P."/>
            <person name="Choudhary V."/>
            <person name="Christoffels A."/>
            <person name="Clutterbuck D.R."/>
            <person name="Crowe M.L."/>
            <person name="Dalla E."/>
            <person name="Dalrymple B.P."/>
            <person name="de Bono B."/>
            <person name="Della Gatta G."/>
            <person name="di Bernardo D."/>
            <person name="Down T."/>
            <person name="Engstrom P."/>
            <person name="Fagiolini M."/>
            <person name="Faulkner G."/>
            <person name="Fletcher C.F."/>
            <person name="Fukushima T."/>
            <person name="Furuno M."/>
            <person name="Futaki S."/>
            <person name="Gariboldi M."/>
            <person name="Georgii-Hemming P."/>
            <person name="Gingeras T.R."/>
            <person name="Gojobori T."/>
            <person name="Green R.E."/>
            <person name="Gustincich S."/>
            <person name="Harbers M."/>
            <person name="Hayashi Y."/>
            <person name="Hensch T.K."/>
            <person name="Hirokawa N."/>
            <person name="Hill D."/>
            <person name="Huminiecki L."/>
            <person name="Iacono M."/>
            <person name="Ikeo K."/>
            <person name="Iwama A."/>
            <person name="Ishikawa T."/>
            <person name="Jakt M."/>
            <person name="Kanapin A."/>
            <person name="Katoh M."/>
            <person name="Kawasawa Y."/>
            <person name="Kelso J."/>
            <person name="Kitamura H."/>
            <person name="Kitano H."/>
            <person name="Kollias G."/>
            <person name="Krishnan S.P."/>
            <person name="Kruger A."/>
            <person name="Kummerfeld S.K."/>
            <person name="Kurochkin I.V."/>
            <person name="Lareau L.F."/>
            <person name="Lazarevic D."/>
            <person name="Lipovich L."/>
            <person name="Liu J."/>
            <person name="Liuni S."/>
            <person name="McWilliam S."/>
            <person name="Madan Babu M."/>
            <person name="Madera M."/>
            <person name="Marchionni L."/>
            <person name="Matsuda H."/>
            <person name="Matsuzawa S."/>
            <person name="Miki H."/>
            <person name="Mignone F."/>
            <person name="Miyake S."/>
            <person name="Morris K."/>
            <person name="Mottagui-Tabar S."/>
            <person name="Mulder N."/>
            <person name="Nakano N."/>
            <person name="Nakauchi H."/>
            <person name="Ng P."/>
            <person name="Nilsson R."/>
            <person name="Nishiguchi S."/>
            <person name="Nishikawa S."/>
            <person name="Nori F."/>
            <person name="Ohara O."/>
            <person name="Okazaki Y."/>
            <person name="Orlando V."/>
            <person name="Pang K.C."/>
            <person name="Pavan W.J."/>
            <person name="Pavesi G."/>
            <person name="Pesole G."/>
            <person name="Petrovsky N."/>
            <person name="Piazza S."/>
            <person name="Reed J."/>
            <person name="Reid J.F."/>
            <person name="Ring B.Z."/>
            <person name="Ringwald M."/>
            <person name="Rost B."/>
            <person name="Ruan Y."/>
            <person name="Salzberg S.L."/>
            <person name="Sandelin A."/>
            <person name="Schneider C."/>
            <person name="Schoenbach C."/>
            <person name="Sekiguchi K."/>
            <person name="Semple C.A."/>
            <person name="Seno S."/>
            <person name="Sessa L."/>
            <person name="Sheng Y."/>
            <person name="Shibata Y."/>
            <person name="Shimada H."/>
            <person name="Shimada K."/>
            <person name="Silva D."/>
            <person name="Sinclair B."/>
            <person name="Sperling S."/>
            <person name="Stupka E."/>
            <person name="Sugiura K."/>
            <person name="Sultana R."/>
            <person name="Takenaka Y."/>
            <person name="Taki K."/>
            <person name="Tammoja K."/>
            <person name="Tan S.L."/>
            <person name="Tang S."/>
            <person name="Taylor M.S."/>
            <person name="Tegner J."/>
            <person name="Teichmann S.A."/>
            <person name="Ueda H.R."/>
            <person name="van Nimwegen E."/>
            <person name="Verardo R."/>
            <person name="Wei C.L."/>
            <person name="Yagi K."/>
            <person name="Yamanishi H."/>
            <person name="Zabarovsky E."/>
            <person name="Zhu S."/>
            <person name="Zimmer A."/>
            <person name="Hide W."/>
            <person name="Bult C."/>
            <person name="Grimmond S.M."/>
            <person name="Teasdale R.D."/>
            <person name="Liu E.T."/>
            <person name="Brusic V."/>
            <person name="Quackenbush J."/>
            <person name="Wahlestedt C."/>
            <person name="Mattick J.S."/>
            <person name="Hume D.A."/>
            <person name="Kai C."/>
            <person name="Sasaki D."/>
            <person name="Tomaru Y."/>
            <person name="Fukuda S."/>
            <person name="Kanamori-Katayama M."/>
            <person name="Suzuki M."/>
            <person name="Aoki J."/>
            <person name="Arakawa T."/>
            <person name="Iida J."/>
            <person name="Imamura K."/>
            <person name="Itoh M."/>
            <person name="Kato T."/>
            <person name="Kawaji H."/>
            <person name="Kawagashira N."/>
            <person name="Kawashima T."/>
            <person name="Kojima M."/>
            <person name="Kondo S."/>
            <person name="Konno H."/>
            <person name="Nakano K."/>
            <person name="Ninomiya N."/>
            <person name="Nishio T."/>
            <person name="Okada M."/>
            <person name="Plessy C."/>
            <person name="Shibata K."/>
            <person name="Shiraki T."/>
            <person name="Suzuki S."/>
            <person name="Tagami M."/>
            <person name="Waki K."/>
            <person name="Watahiki A."/>
            <person name="Okamura-Oho Y."/>
            <person name="Suzuki H."/>
            <person name="Kawai J."/>
            <person name="Hayashizaki Y."/>
        </authorList>
    </citation>
    <scope>NUCLEOTIDE SEQUENCE [LARGE SCALE MRNA] OF 714-1396</scope>
    <source>
        <strain>C57BL/6J</strain>
        <tissue>Egg</tissue>
    </source>
</reference>
<reference key="5">
    <citation type="journal article" date="2006" name="Proc. Natl. Acad. Sci. U.S.A.">
        <title>TEX14 is essential for intercellular bridges and fertility in male mice.</title>
        <authorList>
            <person name="Greenbaum M.P."/>
            <person name="Yan W."/>
            <person name="Wu M.H."/>
            <person name="Lin Y.N."/>
            <person name="Agno J.E."/>
            <person name="Sharma M."/>
            <person name="Braun R.E."/>
            <person name="Rajkovic A."/>
            <person name="Matzuk M.M."/>
        </authorList>
    </citation>
    <scope>FUNCTION</scope>
    <scope>ABSENCE OF PROTEIN KINASE ACTIVITY</scope>
    <scope>SUBCELLULAR LOCATION</scope>
    <scope>TISSUE SPECIFICITY</scope>
    <scope>DISRUPTION PHENOTYPE</scope>
</reference>
<reference key="6">
    <citation type="journal article" date="2007" name="Dev. Biol.">
        <title>Conversion of midbodies into germ cell intercellular bridges.</title>
        <authorList>
            <person name="Greenbaum M.P."/>
            <person name="Ma L."/>
            <person name="Matzuk M.M."/>
        </authorList>
    </citation>
    <scope>SUBCELLULAR LOCATION</scope>
    <scope>INTERACTION WITH KIF23</scope>
</reference>
<reference key="7">
    <citation type="journal article" date="2009" name="Biol. Reprod.">
        <title>Mouse TEX14 is required for embryonic germ cell intercellular bridges but not female fertility.</title>
        <authorList>
            <person name="Greenbaum M.P."/>
            <person name="Iwamori N."/>
            <person name="Agno J.E."/>
            <person name="Matzuk M.M."/>
        </authorList>
    </citation>
    <scope>FUNCTION</scope>
    <scope>DISRUPTION PHENOTYPE</scope>
    <scope>SUBCELLULAR LOCATION</scope>
</reference>
<reference key="8">
    <citation type="journal article" date="2010" name="Cell">
        <title>A tissue-specific atlas of mouse protein phosphorylation and expression.</title>
        <authorList>
            <person name="Huttlin E.L."/>
            <person name="Jedrychowski M.P."/>
            <person name="Elias J.E."/>
            <person name="Goswami T."/>
            <person name="Rad R."/>
            <person name="Beausoleil S.A."/>
            <person name="Villen J."/>
            <person name="Haas W."/>
            <person name="Sowa M.E."/>
            <person name="Gygi S.P."/>
        </authorList>
    </citation>
    <scope>PHOSPHORYLATION [LARGE SCALE ANALYSIS] AT SER-186; SER-1060; SER-1221; SER-1357; SER-1358; SER-1412 AND SER-1449</scope>
    <scope>IDENTIFICATION BY MASS SPECTROMETRY [LARGE SCALE ANALYSIS]</scope>
    <source>
        <tissue>Testis</tissue>
    </source>
</reference>
<reference key="9">
    <citation type="journal article" date="2010" name="Mol. Cell. Biol.">
        <title>TEX14 interacts with CEP55 to block cell abscission.</title>
        <authorList>
            <person name="Iwamori T."/>
            <person name="Iwamori N."/>
            <person name="Ma L."/>
            <person name="Edson M.A."/>
            <person name="Greenbaum M.P."/>
            <person name="Matzuk M.M."/>
        </authorList>
    </citation>
    <scope>FUNCTION</scope>
    <scope>SUBCELLULAR LOCATION</scope>
    <scope>INTERACTION WITH CEP55</scope>
    <scope>MUTAGENESIS OF GLY-791; PRO-792 AND TYR-797</scope>
</reference>
<reference key="10">
    <citation type="journal article" date="2011" name="PLoS ONE">
        <title>Identification and characterization of RBM44 as a novel intercellular bridge protein.</title>
        <authorList>
            <person name="Iwamori T."/>
            <person name="Lin Y.N."/>
            <person name="Ma L."/>
            <person name="Iwamori N."/>
            <person name="Matzuk M.M."/>
        </authorList>
    </citation>
    <scope>INTERACTION WITH RBM44</scope>
</reference>
<reference key="11">
    <citation type="journal article" date="2012" name="Mech. Dev.">
        <title>Mouse germ cell clusters form by aggregation as well as clonal divisions.</title>
        <authorList>
            <person name="Mork L."/>
            <person name="Tang H."/>
            <person name="Batchvarov I."/>
            <person name="Capel B."/>
        </authorList>
    </citation>
    <scope>SUBCELLULAR LOCATION</scope>
</reference>
<reference key="12">
    <citation type="journal article" date="2012" name="Mol. Cell">
        <title>Tex14, a plk1-regulated protein, is required for kinetochore-microtubule attachment and regulation of the spindle assembly checkpoint.</title>
        <authorList>
            <person name="Mondal G."/>
            <person name="Ohashi A."/>
            <person name="Yang L."/>
            <person name="Rowley M."/>
            <person name="Couch F.J."/>
        </authorList>
    </citation>
    <scope>FUNCTION</scope>
    <scope>SUBCELLULAR LOCATION</scope>
    <scope>PHOSPHORYLATION AT SER-431</scope>
    <scope>MUTAGENESIS OF SER-431 AND 889-ARG--ASN-897</scope>
</reference>
<evidence type="ECO:0000250" key="1">
    <source>
        <dbReference type="UniProtKB" id="F1M5M3"/>
    </source>
</evidence>
<evidence type="ECO:0000255" key="2">
    <source>
        <dbReference type="PROSITE-ProRule" id="PRU00159"/>
    </source>
</evidence>
<evidence type="ECO:0000256" key="3">
    <source>
        <dbReference type="SAM" id="MobiDB-lite"/>
    </source>
</evidence>
<evidence type="ECO:0000269" key="4">
    <source>
    </source>
</evidence>
<evidence type="ECO:0000269" key="5">
    <source>
    </source>
</evidence>
<evidence type="ECO:0000269" key="6">
    <source>
    </source>
</evidence>
<evidence type="ECO:0000269" key="7">
    <source>
    </source>
</evidence>
<evidence type="ECO:0000269" key="8">
    <source>
    </source>
</evidence>
<evidence type="ECO:0000269" key="9">
    <source>
    </source>
</evidence>
<evidence type="ECO:0000269" key="10">
    <source>
    </source>
</evidence>
<evidence type="ECO:0000269" key="11">
    <source>
    </source>
</evidence>
<evidence type="ECO:0000303" key="12">
    <source>
    </source>
</evidence>
<evidence type="ECO:0000305" key="13"/>
<evidence type="ECO:0000305" key="14">
    <source>
    </source>
</evidence>
<evidence type="ECO:0007744" key="15">
    <source>
    </source>
</evidence>